<sequence length="203" mass="22986">MNSLTWILAVLFVTPAASYFIHVDANEEQCFFDRLTSGTKMGLMFEVAEGGFLDIDVKITGPDNKEIYKGERESSGKFTFAAHMDGVYTYCFGNKMSTMTPKAVMFTVEITEPHQQAPGAAANQDAADNAKLEEMVRELSSALMSVKHEQEYMEVRERVHRNINENTNSRVVMWAAFEAFVLVGMTVGQIFYLKRFFEVRTMV</sequence>
<gene>
    <name type="primary">sel-9</name>
    <name type="ORF">W02D7.7</name>
</gene>
<evidence type="ECO:0000255" key="1"/>
<evidence type="ECO:0000255" key="2">
    <source>
        <dbReference type="PROSITE-ProRule" id="PRU00096"/>
    </source>
</evidence>
<evidence type="ECO:0000269" key="3">
    <source>
    </source>
</evidence>
<evidence type="ECO:0000269" key="4">
    <source>
    </source>
</evidence>
<evidence type="ECO:0000305" key="5"/>
<name>TMED2_CAEEL</name>
<comment type="function">
    <text evidence="3 4">May have a role in the negative regulation of lin-12 and glp-1 transport to the cell surface (PubMed:10366590). May also have a role in a quality control mechanism for endoplasmic reticulum-Golgi transport; the budding of coatomer-coated and other species of coated vesicles, could bind cargo molecules to collect them into budding vesicles (PubMed:10366590). Involved in regulating the expression of proteasomal subunits such as rpt-3 in order to confer resistance to proteasomal dysfunction (PubMed:27528192).</text>
</comment>
<comment type="subcellular location">
    <subcellularLocation>
        <location>Cytoplasmic vesicle membrane</location>
        <topology>Single-pass type I membrane protein</topology>
    </subcellularLocation>
    <subcellularLocation>
        <location>Cytoplasmic vesicle</location>
        <location>COPI-coated vesicle membrane</location>
        <topology>Single-pass type I membrane protein</topology>
    </subcellularLocation>
    <subcellularLocation>
        <location>Golgi apparatus membrane</location>
        <topology>Single-pass type I membrane protein</topology>
    </subcellularLocation>
    <text>Golgi-derived coatomer-coated vesicles.</text>
</comment>
<comment type="similarity">
    <text evidence="5">Belongs to the EMP24/GP25L family.</text>
</comment>
<proteinExistence type="evidence at protein level"/>
<dbReference type="EMBL" id="FO081199">
    <property type="protein sequence ID" value="CCD69837.1"/>
    <property type="molecule type" value="Genomic_DNA"/>
</dbReference>
<dbReference type="PIR" id="T29844">
    <property type="entry name" value="T29844"/>
</dbReference>
<dbReference type="RefSeq" id="NP_001370673.1">
    <property type="nucleotide sequence ID" value="NM_001383355.2"/>
</dbReference>
<dbReference type="RefSeq" id="NP_505145.1">
    <property type="nucleotide sequence ID" value="NM_072744.4"/>
</dbReference>
<dbReference type="SMR" id="O17528"/>
<dbReference type="BioGRID" id="44254">
    <property type="interactions" value="12"/>
</dbReference>
<dbReference type="FunCoup" id="O17528">
    <property type="interactions" value="3448"/>
</dbReference>
<dbReference type="STRING" id="6239.W02D7.7.1"/>
<dbReference type="PaxDb" id="6239-W02D7.7"/>
<dbReference type="PeptideAtlas" id="O17528"/>
<dbReference type="EnsemblMetazoa" id="W02D7.7.1">
    <property type="protein sequence ID" value="W02D7.7.1"/>
    <property type="gene ID" value="WBGene00004766"/>
</dbReference>
<dbReference type="GeneID" id="179213"/>
<dbReference type="UCSC" id="W02D7.7.1">
    <property type="organism name" value="c. elegans"/>
</dbReference>
<dbReference type="AGR" id="WB:WBGene00004766"/>
<dbReference type="WormBase" id="W02D7.7">
    <property type="protein sequence ID" value="CE14448"/>
    <property type="gene ID" value="WBGene00004766"/>
    <property type="gene designation" value="sel-9"/>
</dbReference>
<dbReference type="eggNOG" id="KOG1692">
    <property type="taxonomic scope" value="Eukaryota"/>
</dbReference>
<dbReference type="GeneTree" id="ENSGT00940000167055"/>
<dbReference type="HOGENOM" id="CLU_066963_4_1_1"/>
<dbReference type="InParanoid" id="O17528"/>
<dbReference type="OMA" id="HFDPLMQ"/>
<dbReference type="OrthoDB" id="1929172at2759"/>
<dbReference type="PhylomeDB" id="O17528"/>
<dbReference type="Reactome" id="R-CEL-1912420">
    <property type="pathway name" value="Pre-NOTCH Processing in Golgi"/>
</dbReference>
<dbReference type="Reactome" id="R-CEL-6807878">
    <property type="pathway name" value="COPI-mediated anterograde transport"/>
</dbReference>
<dbReference type="Reactome" id="R-CEL-6811434">
    <property type="pathway name" value="COPI-dependent Golgi-to-ER retrograde traffic"/>
</dbReference>
<dbReference type="SignaLink" id="O17528"/>
<dbReference type="PRO" id="PR:O17528"/>
<dbReference type="Proteomes" id="UP000001940">
    <property type="component" value="Chromosome V"/>
</dbReference>
<dbReference type="Bgee" id="WBGene00004766">
    <property type="expression patterns" value="Expressed in germ line (C elegans) and 4 other cell types or tissues"/>
</dbReference>
<dbReference type="GO" id="GO:0030663">
    <property type="term" value="C:COPI-coated vesicle membrane"/>
    <property type="evidence" value="ECO:0007669"/>
    <property type="project" value="UniProtKB-SubCell"/>
</dbReference>
<dbReference type="GO" id="GO:0030134">
    <property type="term" value="C:COPII-coated ER to Golgi transport vesicle"/>
    <property type="evidence" value="ECO:0000318"/>
    <property type="project" value="GO_Central"/>
</dbReference>
<dbReference type="GO" id="GO:0005783">
    <property type="term" value="C:endoplasmic reticulum"/>
    <property type="evidence" value="ECO:0000318"/>
    <property type="project" value="GO_Central"/>
</dbReference>
<dbReference type="GO" id="GO:0005793">
    <property type="term" value="C:endoplasmic reticulum-Golgi intermediate compartment"/>
    <property type="evidence" value="ECO:0000318"/>
    <property type="project" value="GO_Central"/>
</dbReference>
<dbReference type="GO" id="GO:0012507">
    <property type="term" value="C:ER to Golgi transport vesicle membrane"/>
    <property type="evidence" value="ECO:0000303"/>
    <property type="project" value="UniProtKB"/>
</dbReference>
<dbReference type="GO" id="GO:0005794">
    <property type="term" value="C:Golgi apparatus"/>
    <property type="evidence" value="ECO:0000318"/>
    <property type="project" value="GO_Central"/>
</dbReference>
<dbReference type="GO" id="GO:0000139">
    <property type="term" value="C:Golgi membrane"/>
    <property type="evidence" value="ECO:0007669"/>
    <property type="project" value="UniProtKB-SubCell"/>
</dbReference>
<dbReference type="GO" id="GO:0006888">
    <property type="term" value="P:endoplasmic reticulum to Golgi vesicle-mediated transport"/>
    <property type="evidence" value="ECO:0000315"/>
    <property type="project" value="UniProtKB"/>
</dbReference>
<dbReference type="GO" id="GO:0007030">
    <property type="term" value="P:Golgi organization"/>
    <property type="evidence" value="ECO:0000318"/>
    <property type="project" value="GO_Central"/>
</dbReference>
<dbReference type="GO" id="GO:0006886">
    <property type="term" value="P:intracellular protein transport"/>
    <property type="evidence" value="ECO:0000318"/>
    <property type="project" value="GO_Central"/>
</dbReference>
<dbReference type="GO" id="GO:0008593">
    <property type="term" value="P:regulation of Notch signaling pathway"/>
    <property type="evidence" value="ECO:0000316"/>
    <property type="project" value="WormBase"/>
</dbReference>
<dbReference type="GO" id="GO:0051049">
    <property type="term" value="P:regulation of transport"/>
    <property type="evidence" value="ECO:0000315"/>
    <property type="project" value="UniProtKB"/>
</dbReference>
<dbReference type="InterPro" id="IPR015720">
    <property type="entry name" value="Emp24-like"/>
</dbReference>
<dbReference type="InterPro" id="IPR009038">
    <property type="entry name" value="GOLD_dom"/>
</dbReference>
<dbReference type="InterPro" id="IPR036598">
    <property type="entry name" value="GOLD_dom_sf"/>
</dbReference>
<dbReference type="PANTHER" id="PTHR22811">
    <property type="entry name" value="TRANSMEMBRANE EMP24 DOMAIN-CONTAINING PROTEIN"/>
    <property type="match status" value="1"/>
</dbReference>
<dbReference type="Pfam" id="PF01105">
    <property type="entry name" value="EMP24_GP25L"/>
    <property type="match status" value="1"/>
</dbReference>
<dbReference type="SMART" id="SM01190">
    <property type="entry name" value="EMP24_GP25L"/>
    <property type="match status" value="1"/>
</dbReference>
<dbReference type="SUPFAM" id="SSF101576">
    <property type="entry name" value="Supernatant protein factor (SPF), C-terminal domain"/>
    <property type="match status" value="1"/>
</dbReference>
<dbReference type="PROSITE" id="PS50866">
    <property type="entry name" value="GOLD"/>
    <property type="match status" value="1"/>
</dbReference>
<organism>
    <name type="scientific">Caenorhabditis elegans</name>
    <dbReference type="NCBI Taxonomy" id="6239"/>
    <lineage>
        <taxon>Eukaryota</taxon>
        <taxon>Metazoa</taxon>
        <taxon>Ecdysozoa</taxon>
        <taxon>Nematoda</taxon>
        <taxon>Chromadorea</taxon>
        <taxon>Rhabditida</taxon>
        <taxon>Rhabditina</taxon>
        <taxon>Rhabditomorpha</taxon>
        <taxon>Rhabditoidea</taxon>
        <taxon>Rhabditidae</taxon>
        <taxon>Peloderinae</taxon>
        <taxon>Caenorhabditis</taxon>
    </lineage>
</organism>
<accession>O17528</accession>
<reference key="1">
    <citation type="journal article" date="1999" name="J. Cell Biol.">
        <title>p24 proteins and quality control of LIN-12 and GLP-1 trafficking in Caenorhabditis elegans.</title>
        <authorList>
            <person name="Wen C."/>
            <person name="Greenwald I."/>
        </authorList>
    </citation>
    <scope>NUCLEOTIDE SEQUENCE [GENOMIC DNA]</scope>
    <scope>FUNCTION</scope>
    <scope>MUTAGENESIS OF VAL-47; GLY-51 AND SER-97</scope>
</reference>
<reference key="2">
    <citation type="journal article" date="1998" name="Science">
        <title>Genome sequence of the nematode C. elegans: a platform for investigating biology.</title>
        <authorList>
            <consortium name="The C. elegans sequencing consortium"/>
        </authorList>
    </citation>
    <scope>NUCLEOTIDE SEQUENCE [LARGE SCALE GENOMIC DNA]</scope>
    <source>
        <strain>Bristol N2</strain>
    </source>
</reference>
<reference key="3">
    <citation type="journal article" date="2016" name="Elife">
        <title>Proteasome dysfunction triggers activation of SKN-1A/Nrf1 by the aspartic protease DDI-1.</title>
        <authorList>
            <person name="Lehrbach N.J."/>
            <person name="Ruvkun G."/>
        </authorList>
    </citation>
    <scope>FUNCTION</scope>
    <scope>MUTAGENESIS OF SER-140</scope>
</reference>
<feature type="signal peptide" evidence="1">
    <location>
        <begin position="1"/>
        <end position="18"/>
    </location>
</feature>
<feature type="chain" id="PRO_0000010406" description="Suppressor/enhancer of lin-12 protein 9">
    <location>
        <begin position="19"/>
        <end position="203"/>
    </location>
</feature>
<feature type="topological domain" description="Lumenal" evidence="1">
    <location>
        <begin position="19"/>
        <end position="170"/>
    </location>
</feature>
<feature type="transmembrane region" description="Helical" evidence="1">
    <location>
        <begin position="171"/>
        <end position="191"/>
    </location>
</feature>
<feature type="topological domain" description="Cytoplasmic" evidence="1">
    <location>
        <begin position="192"/>
        <end position="203"/>
    </location>
</feature>
<feature type="domain" description="GOLD" evidence="2">
    <location>
        <begin position="28"/>
        <end position="110"/>
    </location>
</feature>
<feature type="mutagenesis site" description="In allele sel-9(ar26); suppression of lin-12(n676n930) egg laying defect." evidence="3">
    <original>V</original>
    <variation>I</variation>
    <location>
        <position position="47"/>
    </location>
</feature>
<feature type="mutagenesis site" description="In allele sel-9(ar174) and allele sel-9(ar175); multivulval phenotype in combination with lin-12(n676n930)." evidence="3">
    <original>G</original>
    <variation>R</variation>
    <location>
        <position position="51"/>
    </location>
</feature>
<feature type="mutagenesis site" description="In allele sel-9(ar176); multivulval phenotype in combination with lin-12(n676n930)." evidence="3">
    <original>G</original>
    <variation>S</variation>
    <location>
        <position position="51"/>
    </location>
</feature>
<feature type="mutagenesis site" description="In allele sel-9(ar22) and allele sel-9(ar177); suppression of lin-12(n676n930) egg laying defect." evidence="3">
    <original>S</original>
    <variation>N</variation>
    <location>
        <position position="97"/>
    </location>
</feature>
<feature type="mutagenesis site" description="In mg550; defective expression of the proteasomal subunit rpt-3 in a pbs-5 (proteasomal subunit) mutant background." evidence="4">
    <original>S</original>
    <variation>F</variation>
    <location>
        <position position="140"/>
    </location>
</feature>
<keyword id="KW-0968">Cytoplasmic vesicle</keyword>
<keyword id="KW-0931">ER-Golgi transport</keyword>
<keyword id="KW-0333">Golgi apparatus</keyword>
<keyword id="KW-0472">Membrane</keyword>
<keyword id="KW-0653">Protein transport</keyword>
<keyword id="KW-1185">Reference proteome</keyword>
<keyword id="KW-0732">Signal</keyword>
<keyword id="KW-0812">Transmembrane</keyword>
<keyword id="KW-1133">Transmembrane helix</keyword>
<keyword id="KW-0813">Transport</keyword>
<protein>
    <recommendedName>
        <fullName>Suppressor/enhancer of lin-12 protein 9</fullName>
    </recommendedName>
</protein>